<gene>
    <name type="primary">Gstm6</name>
    <name type="synonym">Gstm5</name>
</gene>
<accession>O35660</accession>
<accession>O35661</accession>
<accession>Q8K0C3</accession>
<name>GSTM6_MOUSE</name>
<feature type="chain" id="PRO_0000185830" description="Glutathione S-transferase Mu 6">
    <location>
        <begin position="1"/>
        <end position="218"/>
    </location>
</feature>
<feature type="domain" description="GST N-terminal">
    <location>
        <begin position="1"/>
        <end position="88"/>
    </location>
</feature>
<feature type="domain" description="GST C-terminal">
    <location>
        <begin position="90"/>
        <end position="208"/>
    </location>
</feature>
<feature type="binding site" evidence="2">
    <location>
        <begin position="7"/>
        <end position="8"/>
    </location>
    <ligand>
        <name>glutathione</name>
        <dbReference type="ChEBI" id="CHEBI:57925"/>
    </ligand>
</feature>
<feature type="binding site" evidence="2">
    <location>
        <begin position="46"/>
        <end position="50"/>
    </location>
    <ligand>
        <name>glutathione</name>
        <dbReference type="ChEBI" id="CHEBI:57925"/>
    </ligand>
</feature>
<feature type="binding site" evidence="2">
    <location>
        <begin position="59"/>
        <end position="60"/>
    </location>
    <ligand>
        <name>glutathione</name>
        <dbReference type="ChEBI" id="CHEBI:57925"/>
    </ligand>
</feature>
<feature type="binding site" evidence="2">
    <location>
        <begin position="72"/>
        <end position="73"/>
    </location>
    <ligand>
        <name>glutathione</name>
        <dbReference type="ChEBI" id="CHEBI:57925"/>
    </ligand>
</feature>
<feature type="binding site" evidence="1">
    <location>
        <position position="116"/>
    </location>
    <ligand>
        <name>substrate</name>
    </ligand>
</feature>
<feature type="sequence conflict" description="In Ref. 1; CAA04060/CAA04061." evidence="4" ref="1">
    <original>K</original>
    <variation>R</variation>
    <location>
        <position position="31"/>
    </location>
</feature>
<feature type="sequence conflict" description="In Ref. 1; CAA04060." evidence="4" ref="1">
    <original>D</original>
    <variation>G</variation>
    <location>
        <position position="54"/>
    </location>
</feature>
<feature type="sequence conflict" description="In Ref. 1; CAA04061." evidence="4" ref="1">
    <original>KQ</original>
    <variation>NR</variation>
    <location>
        <begin position="102"/>
        <end position="103"/>
    </location>
</feature>
<proteinExistence type="evidence at protein level"/>
<evidence type="ECO:0000250" key="1"/>
<evidence type="ECO:0000250" key="2">
    <source>
        <dbReference type="UniProtKB" id="P08515"/>
    </source>
</evidence>
<evidence type="ECO:0000269" key="3">
    <source>
    </source>
</evidence>
<evidence type="ECO:0000305" key="4"/>
<comment type="function">
    <text evidence="1">Conjugation of reduced glutathione to a wide number of exogenous and endogenous hydrophobic electrophiles.</text>
</comment>
<comment type="catalytic activity">
    <reaction>
        <text>RX + glutathione = an S-substituted glutathione + a halide anion + H(+)</text>
        <dbReference type="Rhea" id="RHEA:16437"/>
        <dbReference type="ChEBI" id="CHEBI:15378"/>
        <dbReference type="ChEBI" id="CHEBI:16042"/>
        <dbReference type="ChEBI" id="CHEBI:17792"/>
        <dbReference type="ChEBI" id="CHEBI:57925"/>
        <dbReference type="ChEBI" id="CHEBI:90779"/>
        <dbReference type="EC" id="2.5.1.18"/>
    </reaction>
</comment>
<comment type="subunit">
    <text evidence="1">Homodimer.</text>
</comment>
<comment type="subcellular location">
    <subcellularLocation>
        <location evidence="1">Cytoplasm</location>
    </subcellularLocation>
</comment>
<comment type="tissue specificity">
    <text evidence="3">Expressed in liver, stomach and small intestine. Not expressed in spleen, kidney, colon, heart, muscle, brain or lung.</text>
</comment>
<comment type="similarity">
    <text evidence="4">Belongs to the GST superfamily. Mu family.</text>
</comment>
<reference key="1">
    <citation type="journal article" date="1998" name="Biochem. J.">
        <title>Identification of a novel murine glutathione S-transferase class mu gene.</title>
        <authorList>
            <person name="De Bruin W.C.C."/>
            <person name="te Morsche R.H.M."/>
            <person name="Wagenmans M.J.M."/>
            <person name="Alferink J.C."/>
            <person name="Townsend A.J."/>
            <person name="Wieringa B."/>
            <person name="Peters W.H.M."/>
        </authorList>
    </citation>
    <scope>NUCLEOTIDE SEQUENCE [GENOMIC DNA / MRNA]</scope>
    <scope>TISSUE SPECIFICITY</scope>
    <source>
        <strain>129/Sv</strain>
        <strain>C57BL/6J</strain>
        <strain>FVB/NJ</strain>
        <tissue>Liver</tissue>
    </source>
</reference>
<reference key="2">
    <citation type="journal article" date="2009" name="PLoS Biol.">
        <title>Lineage-specific biology revealed by a finished genome assembly of the mouse.</title>
        <authorList>
            <person name="Church D.M."/>
            <person name="Goodstadt L."/>
            <person name="Hillier L.W."/>
            <person name="Zody M.C."/>
            <person name="Goldstein S."/>
            <person name="She X."/>
            <person name="Bult C.J."/>
            <person name="Agarwala R."/>
            <person name="Cherry J.L."/>
            <person name="DiCuccio M."/>
            <person name="Hlavina W."/>
            <person name="Kapustin Y."/>
            <person name="Meric P."/>
            <person name="Maglott D."/>
            <person name="Birtle Z."/>
            <person name="Marques A.C."/>
            <person name="Graves T."/>
            <person name="Zhou S."/>
            <person name="Teague B."/>
            <person name="Potamousis K."/>
            <person name="Churas C."/>
            <person name="Place M."/>
            <person name="Herschleb J."/>
            <person name="Runnheim R."/>
            <person name="Forrest D."/>
            <person name="Amos-Landgraf J."/>
            <person name="Schwartz D.C."/>
            <person name="Cheng Z."/>
            <person name="Lindblad-Toh K."/>
            <person name="Eichler E.E."/>
            <person name="Ponting C.P."/>
        </authorList>
    </citation>
    <scope>NUCLEOTIDE SEQUENCE [LARGE SCALE GENOMIC DNA]</scope>
    <source>
        <strain>C57BL/6J</strain>
    </source>
</reference>
<reference key="3">
    <citation type="journal article" date="2004" name="Genome Res.">
        <title>The status, quality, and expansion of the NIH full-length cDNA project: the Mammalian Gene Collection (MGC).</title>
        <authorList>
            <consortium name="The MGC Project Team"/>
        </authorList>
    </citation>
    <scope>NUCLEOTIDE SEQUENCE [LARGE SCALE MRNA]</scope>
    <source>
        <strain>FVB/N</strain>
        <tissue>Liver</tissue>
    </source>
</reference>
<reference key="4">
    <citation type="journal article" date="2010" name="Cell">
        <title>A tissue-specific atlas of mouse protein phosphorylation and expression.</title>
        <authorList>
            <person name="Huttlin E.L."/>
            <person name="Jedrychowski M.P."/>
            <person name="Elias J.E."/>
            <person name="Goswami T."/>
            <person name="Rad R."/>
            <person name="Beausoleil S.A."/>
            <person name="Villen J."/>
            <person name="Haas W."/>
            <person name="Sowa M.E."/>
            <person name="Gygi S.P."/>
        </authorList>
    </citation>
    <scope>IDENTIFICATION BY MASS SPECTROMETRY [LARGE SCALE ANALYSIS]</scope>
    <source>
        <tissue>Liver</tissue>
        <tissue>Testis</tissue>
    </source>
</reference>
<keyword id="KW-0963">Cytoplasm</keyword>
<keyword id="KW-1185">Reference proteome</keyword>
<keyword id="KW-0808">Transferase</keyword>
<protein>
    <recommendedName>
        <fullName>Glutathione S-transferase Mu 6</fullName>
        <ecNumber>2.5.1.18</ecNumber>
    </recommendedName>
    <alternativeName>
        <fullName>GST class-mu 6</fullName>
    </alternativeName>
    <alternativeName>
        <fullName>Glutathione-S-transferase class M5</fullName>
    </alternativeName>
</protein>
<organism>
    <name type="scientific">Mus musculus</name>
    <name type="common">Mouse</name>
    <dbReference type="NCBI Taxonomy" id="10090"/>
    <lineage>
        <taxon>Eukaryota</taxon>
        <taxon>Metazoa</taxon>
        <taxon>Chordata</taxon>
        <taxon>Craniata</taxon>
        <taxon>Vertebrata</taxon>
        <taxon>Euteleostomi</taxon>
        <taxon>Mammalia</taxon>
        <taxon>Eutheria</taxon>
        <taxon>Euarchontoglires</taxon>
        <taxon>Glires</taxon>
        <taxon>Rodentia</taxon>
        <taxon>Myomorpha</taxon>
        <taxon>Muroidea</taxon>
        <taxon>Muridae</taxon>
        <taxon>Murinae</taxon>
        <taxon>Mus</taxon>
        <taxon>Mus</taxon>
    </lineage>
</organism>
<sequence>MPVTLGYWDIRGLGHAIRLLLEYTETGYEEKRYAMGDAPDYDRSQWLNDKFKLDLDFPNLPYLIDGSHKVTQSNAILRYLGRKHNLCGETEEERIRVDILEKQVMDTRIQMGMLCYSADFEKRKPEFLKGLPDQLKLYSEFLGKQPWFAGDKITFADFLVYDVLDQHRMFEPTCLDAFPNLKDFMARFEGLRKISAYMKTSRFLPSPVYLKQATWGNE</sequence>
<dbReference type="EC" id="2.5.1.18"/>
<dbReference type="EMBL" id="AJ000413">
    <property type="protein sequence ID" value="CAA04061.1"/>
    <property type="molecule type" value="mRNA"/>
</dbReference>
<dbReference type="EMBL" id="AJ000412">
    <property type="protein sequence ID" value="CAA04060.1"/>
    <property type="molecule type" value="Genomic_DNA"/>
</dbReference>
<dbReference type="EMBL" id="AC079042">
    <property type="status" value="NOT_ANNOTATED_CDS"/>
    <property type="molecule type" value="Genomic_DNA"/>
</dbReference>
<dbReference type="EMBL" id="BC031818">
    <property type="protein sequence ID" value="AAH31818.1"/>
    <property type="molecule type" value="mRNA"/>
</dbReference>
<dbReference type="CCDS" id="CCDS38596.1"/>
<dbReference type="RefSeq" id="NP_032210.3">
    <property type="nucleotide sequence ID" value="NM_008184.4"/>
</dbReference>
<dbReference type="SMR" id="O35660"/>
<dbReference type="BioGRID" id="200099">
    <property type="interactions" value="2"/>
</dbReference>
<dbReference type="FunCoup" id="O35660">
    <property type="interactions" value="187"/>
</dbReference>
<dbReference type="STRING" id="10090.ENSMUSP00000102296"/>
<dbReference type="iPTMnet" id="O35660"/>
<dbReference type="PhosphoSitePlus" id="O35660"/>
<dbReference type="SwissPalm" id="O35660"/>
<dbReference type="jPOST" id="O35660"/>
<dbReference type="PaxDb" id="10090-ENSMUSP00000102295"/>
<dbReference type="ProteomicsDB" id="271181"/>
<dbReference type="DNASU" id="14867"/>
<dbReference type="Ensembl" id="ENSMUST00000106685.9">
    <property type="protein sequence ID" value="ENSMUSP00000102296.3"/>
    <property type="gene ID" value="ENSMUSG00000068762.12"/>
</dbReference>
<dbReference type="GeneID" id="14867"/>
<dbReference type="KEGG" id="mmu:14867"/>
<dbReference type="AGR" id="MGI:1309467"/>
<dbReference type="CTD" id="14867"/>
<dbReference type="MGI" id="MGI:1309467">
    <property type="gene designation" value="Gstm6"/>
</dbReference>
<dbReference type="VEuPathDB" id="HostDB:ENSMUSG00000068762"/>
<dbReference type="eggNOG" id="KOG1695">
    <property type="taxonomic scope" value="Eukaryota"/>
</dbReference>
<dbReference type="GeneTree" id="ENSGT00940000160258"/>
<dbReference type="HOGENOM" id="CLU_039475_2_0_1"/>
<dbReference type="InParanoid" id="O35660"/>
<dbReference type="OMA" id="CNGASAK"/>
<dbReference type="OrthoDB" id="4951845at2759"/>
<dbReference type="Reactome" id="R-MMU-156590">
    <property type="pathway name" value="Glutathione conjugation"/>
</dbReference>
<dbReference type="BioGRID-ORCS" id="14867">
    <property type="hits" value="0 hits in 78 CRISPR screens"/>
</dbReference>
<dbReference type="ChiTaRS" id="Gstm6">
    <property type="organism name" value="mouse"/>
</dbReference>
<dbReference type="PRO" id="PR:O35660"/>
<dbReference type="Proteomes" id="UP000000589">
    <property type="component" value="Chromosome 3"/>
</dbReference>
<dbReference type="RNAct" id="O35660">
    <property type="molecule type" value="protein"/>
</dbReference>
<dbReference type="Bgee" id="ENSMUSG00000068762">
    <property type="expression patterns" value="Expressed in duodenum and 103 other cell types or tissues"/>
</dbReference>
<dbReference type="ExpressionAtlas" id="O35660">
    <property type="expression patterns" value="baseline and differential"/>
</dbReference>
<dbReference type="GO" id="GO:0005737">
    <property type="term" value="C:cytoplasm"/>
    <property type="evidence" value="ECO:0007669"/>
    <property type="project" value="UniProtKB-SubCell"/>
</dbReference>
<dbReference type="GO" id="GO:0004364">
    <property type="term" value="F:glutathione transferase activity"/>
    <property type="evidence" value="ECO:0007669"/>
    <property type="project" value="UniProtKB-EC"/>
</dbReference>
<dbReference type="CDD" id="cd03209">
    <property type="entry name" value="GST_C_Mu"/>
    <property type="match status" value="1"/>
</dbReference>
<dbReference type="CDD" id="cd03075">
    <property type="entry name" value="GST_N_Mu"/>
    <property type="match status" value="1"/>
</dbReference>
<dbReference type="FunFam" id="1.20.1050.10:FF:000083">
    <property type="entry name" value="Glutathione S-transferase Mu 1"/>
    <property type="match status" value="1"/>
</dbReference>
<dbReference type="FunFam" id="3.40.30.10:FF:000603">
    <property type="entry name" value="Glutathione S-transferase Mu 1"/>
    <property type="match status" value="1"/>
</dbReference>
<dbReference type="Gene3D" id="1.20.1050.10">
    <property type="match status" value="1"/>
</dbReference>
<dbReference type="Gene3D" id="3.40.30.10">
    <property type="entry name" value="Glutaredoxin"/>
    <property type="match status" value="1"/>
</dbReference>
<dbReference type="InterPro" id="IPR010987">
    <property type="entry name" value="Glutathione-S-Trfase_C-like"/>
</dbReference>
<dbReference type="InterPro" id="IPR036282">
    <property type="entry name" value="Glutathione-S-Trfase_C_sf"/>
</dbReference>
<dbReference type="InterPro" id="IPR004045">
    <property type="entry name" value="Glutathione_S-Trfase_N"/>
</dbReference>
<dbReference type="InterPro" id="IPR004046">
    <property type="entry name" value="GST_C"/>
</dbReference>
<dbReference type="InterPro" id="IPR003081">
    <property type="entry name" value="GST_mu"/>
</dbReference>
<dbReference type="InterPro" id="IPR050213">
    <property type="entry name" value="GST_superfamily"/>
</dbReference>
<dbReference type="InterPro" id="IPR036249">
    <property type="entry name" value="Thioredoxin-like_sf"/>
</dbReference>
<dbReference type="PANTHER" id="PTHR11571">
    <property type="entry name" value="GLUTATHIONE S-TRANSFERASE"/>
    <property type="match status" value="1"/>
</dbReference>
<dbReference type="PANTHER" id="PTHR11571:SF247">
    <property type="entry name" value="GLUTATHIONE S-TRANSFERASE MU 1"/>
    <property type="match status" value="1"/>
</dbReference>
<dbReference type="Pfam" id="PF00043">
    <property type="entry name" value="GST_C"/>
    <property type="match status" value="1"/>
</dbReference>
<dbReference type="Pfam" id="PF02798">
    <property type="entry name" value="GST_N"/>
    <property type="match status" value="1"/>
</dbReference>
<dbReference type="PRINTS" id="PR01267">
    <property type="entry name" value="GSTRNSFRASEM"/>
</dbReference>
<dbReference type="SFLD" id="SFLDG01205">
    <property type="entry name" value="AMPS.1"/>
    <property type="match status" value="1"/>
</dbReference>
<dbReference type="SFLD" id="SFLDG00363">
    <property type="entry name" value="AMPS_(cytGST):_Alpha-__Mu-__Pi"/>
    <property type="match status" value="1"/>
</dbReference>
<dbReference type="SUPFAM" id="SSF47616">
    <property type="entry name" value="GST C-terminal domain-like"/>
    <property type="match status" value="1"/>
</dbReference>
<dbReference type="SUPFAM" id="SSF52833">
    <property type="entry name" value="Thioredoxin-like"/>
    <property type="match status" value="1"/>
</dbReference>
<dbReference type="PROSITE" id="PS50405">
    <property type="entry name" value="GST_CTER"/>
    <property type="match status" value="1"/>
</dbReference>
<dbReference type="PROSITE" id="PS50404">
    <property type="entry name" value="GST_NTER"/>
    <property type="match status" value="1"/>
</dbReference>